<keyword id="KW-0997">Cell inner membrane</keyword>
<keyword id="KW-1003">Cell membrane</keyword>
<keyword id="KW-0342">GTP-binding</keyword>
<keyword id="KW-0378">Hydrolase</keyword>
<keyword id="KW-0472">Membrane</keyword>
<keyword id="KW-0547">Nucleotide-binding</keyword>
<keyword id="KW-0648">Protein biosynthesis</keyword>
<protein>
    <recommendedName>
        <fullName evidence="1">Elongation factor 4</fullName>
        <shortName evidence="1">EF-4</shortName>
        <ecNumber evidence="1">3.6.5.n1</ecNumber>
    </recommendedName>
    <alternativeName>
        <fullName evidence="1">Ribosomal back-translocase LepA</fullName>
    </alternativeName>
</protein>
<sequence>MKPYKIENIRNFSIIAHIDHGKSTIADRLLESTSTIEQREMREQLLDSMDLERERGITIKAHPVTMTYEYEGETYELNLIDTPGHVDFSYEVSRSLAACEGALLIVDAAQGVQAQSLANVYLALERDLEIIPVLNKIDLPAAQPEAIKKQIEEFIGLDTSNTIACSAKTGQGIPEILESIIRLVPPPKPPQETELKALIFDSHYDPYVGIMVYVRVISGEIKKGDRITFMATKGSSFEVLGIGAFLPEATLMEGSLRAGQVGYFIANLKKVKDVKIGDTVTTVKHPAKEPLEGFKEIKPVVFAGIYPIDSSDFDTLKDALGRLQLNDSALTIEQESSHSLGFGFRCGFLGLLHLEIIFERISREFDLDIIATAPSVIYKVVLKNGKTLFIDNPTAYPDPALIEHMEEPWVHVNIITPQEYLSNIMSLCMDKRGICLKTDMLDQHRLVLSYELPLNEIVSDFNDKLKSVTKGYGSFDYRLGDYKKGAIIKLEILINDEAVDAFSCLVHRDKAESKGRSICEKLVDVIPPQLFKIPIQAAINKKIIARETIRALAKNVTAKCYGGDITRKRKLWDKQKKGKKRMKEFGKVSIPNTAFVEVLKME</sequence>
<dbReference type="EC" id="3.6.5.n1" evidence="1"/>
<dbReference type="EMBL" id="AM884177">
    <property type="protein sequence ID" value="CAP06713.1"/>
    <property type="molecule type" value="Genomic_DNA"/>
</dbReference>
<dbReference type="RefSeq" id="WP_009871412.1">
    <property type="nucleotide sequence ID" value="NC_010280.2"/>
</dbReference>
<dbReference type="SMR" id="B0BB51"/>
<dbReference type="KEGG" id="ctl:CTLon_0315"/>
<dbReference type="HOGENOM" id="CLU_009995_3_3_0"/>
<dbReference type="Proteomes" id="UP001154401">
    <property type="component" value="Chromosome"/>
</dbReference>
<dbReference type="GO" id="GO:0005886">
    <property type="term" value="C:plasma membrane"/>
    <property type="evidence" value="ECO:0007669"/>
    <property type="project" value="UniProtKB-SubCell"/>
</dbReference>
<dbReference type="GO" id="GO:0005525">
    <property type="term" value="F:GTP binding"/>
    <property type="evidence" value="ECO:0007669"/>
    <property type="project" value="UniProtKB-UniRule"/>
</dbReference>
<dbReference type="GO" id="GO:0003924">
    <property type="term" value="F:GTPase activity"/>
    <property type="evidence" value="ECO:0007669"/>
    <property type="project" value="UniProtKB-UniRule"/>
</dbReference>
<dbReference type="GO" id="GO:0043022">
    <property type="term" value="F:ribosome binding"/>
    <property type="evidence" value="ECO:0007669"/>
    <property type="project" value="UniProtKB-UniRule"/>
</dbReference>
<dbReference type="GO" id="GO:0003746">
    <property type="term" value="F:translation elongation factor activity"/>
    <property type="evidence" value="ECO:0007669"/>
    <property type="project" value="UniProtKB-UniRule"/>
</dbReference>
<dbReference type="GO" id="GO:0045727">
    <property type="term" value="P:positive regulation of translation"/>
    <property type="evidence" value="ECO:0007669"/>
    <property type="project" value="UniProtKB-UniRule"/>
</dbReference>
<dbReference type="CDD" id="cd03699">
    <property type="entry name" value="EF4_II"/>
    <property type="match status" value="1"/>
</dbReference>
<dbReference type="CDD" id="cd16260">
    <property type="entry name" value="EF4_III"/>
    <property type="match status" value="1"/>
</dbReference>
<dbReference type="CDD" id="cd01890">
    <property type="entry name" value="LepA"/>
    <property type="match status" value="1"/>
</dbReference>
<dbReference type="CDD" id="cd03709">
    <property type="entry name" value="lepA_C"/>
    <property type="match status" value="1"/>
</dbReference>
<dbReference type="FunFam" id="3.40.50.300:FF:000078">
    <property type="entry name" value="Elongation factor 4"/>
    <property type="match status" value="1"/>
</dbReference>
<dbReference type="FunFam" id="2.40.30.10:FF:000015">
    <property type="entry name" value="Translation factor GUF1, mitochondrial"/>
    <property type="match status" value="1"/>
</dbReference>
<dbReference type="FunFam" id="3.30.70.240:FF:000007">
    <property type="entry name" value="Translation factor GUF1, mitochondrial"/>
    <property type="match status" value="1"/>
</dbReference>
<dbReference type="FunFam" id="3.30.70.2570:FF:000001">
    <property type="entry name" value="Translation factor GUF1, mitochondrial"/>
    <property type="match status" value="1"/>
</dbReference>
<dbReference type="FunFam" id="3.30.70.870:FF:000004">
    <property type="entry name" value="Translation factor GUF1, mitochondrial"/>
    <property type="match status" value="1"/>
</dbReference>
<dbReference type="Gene3D" id="3.30.70.240">
    <property type="match status" value="1"/>
</dbReference>
<dbReference type="Gene3D" id="3.30.70.2570">
    <property type="entry name" value="Elongation factor 4, C-terminal domain"/>
    <property type="match status" value="1"/>
</dbReference>
<dbReference type="Gene3D" id="3.30.70.870">
    <property type="entry name" value="Elongation Factor G (Translational Gtpase), domain 3"/>
    <property type="match status" value="1"/>
</dbReference>
<dbReference type="Gene3D" id="3.40.50.300">
    <property type="entry name" value="P-loop containing nucleotide triphosphate hydrolases"/>
    <property type="match status" value="1"/>
</dbReference>
<dbReference type="Gene3D" id="2.40.30.10">
    <property type="entry name" value="Translation factors"/>
    <property type="match status" value="1"/>
</dbReference>
<dbReference type="HAMAP" id="MF_00071">
    <property type="entry name" value="LepA"/>
    <property type="match status" value="1"/>
</dbReference>
<dbReference type="InterPro" id="IPR006297">
    <property type="entry name" value="EF-4"/>
</dbReference>
<dbReference type="InterPro" id="IPR035647">
    <property type="entry name" value="EFG_III/V"/>
</dbReference>
<dbReference type="InterPro" id="IPR000640">
    <property type="entry name" value="EFG_V-like"/>
</dbReference>
<dbReference type="InterPro" id="IPR004161">
    <property type="entry name" value="EFTu-like_2"/>
</dbReference>
<dbReference type="InterPro" id="IPR038363">
    <property type="entry name" value="LepA_C_sf"/>
</dbReference>
<dbReference type="InterPro" id="IPR013842">
    <property type="entry name" value="LepA_CTD"/>
</dbReference>
<dbReference type="InterPro" id="IPR035654">
    <property type="entry name" value="LepA_IV"/>
</dbReference>
<dbReference type="InterPro" id="IPR027417">
    <property type="entry name" value="P-loop_NTPase"/>
</dbReference>
<dbReference type="InterPro" id="IPR005225">
    <property type="entry name" value="Small_GTP-bd"/>
</dbReference>
<dbReference type="InterPro" id="IPR000795">
    <property type="entry name" value="T_Tr_GTP-bd_dom"/>
</dbReference>
<dbReference type="InterPro" id="IPR009000">
    <property type="entry name" value="Transl_B-barrel_sf"/>
</dbReference>
<dbReference type="NCBIfam" id="TIGR01393">
    <property type="entry name" value="lepA"/>
    <property type="match status" value="1"/>
</dbReference>
<dbReference type="NCBIfam" id="TIGR00231">
    <property type="entry name" value="small_GTP"/>
    <property type="match status" value="1"/>
</dbReference>
<dbReference type="PANTHER" id="PTHR43512:SF4">
    <property type="entry name" value="TRANSLATION FACTOR GUF1 HOMOLOG, CHLOROPLASTIC"/>
    <property type="match status" value="1"/>
</dbReference>
<dbReference type="PANTHER" id="PTHR43512">
    <property type="entry name" value="TRANSLATION FACTOR GUF1-RELATED"/>
    <property type="match status" value="1"/>
</dbReference>
<dbReference type="Pfam" id="PF00679">
    <property type="entry name" value="EFG_C"/>
    <property type="match status" value="1"/>
</dbReference>
<dbReference type="Pfam" id="PF00009">
    <property type="entry name" value="GTP_EFTU"/>
    <property type="match status" value="1"/>
</dbReference>
<dbReference type="Pfam" id="PF03144">
    <property type="entry name" value="GTP_EFTU_D2"/>
    <property type="match status" value="1"/>
</dbReference>
<dbReference type="Pfam" id="PF06421">
    <property type="entry name" value="LepA_C"/>
    <property type="match status" value="1"/>
</dbReference>
<dbReference type="PRINTS" id="PR00315">
    <property type="entry name" value="ELONGATNFCT"/>
</dbReference>
<dbReference type="SUPFAM" id="SSF54980">
    <property type="entry name" value="EF-G C-terminal domain-like"/>
    <property type="match status" value="2"/>
</dbReference>
<dbReference type="SUPFAM" id="SSF52540">
    <property type="entry name" value="P-loop containing nucleoside triphosphate hydrolases"/>
    <property type="match status" value="1"/>
</dbReference>
<dbReference type="SUPFAM" id="SSF50447">
    <property type="entry name" value="Translation proteins"/>
    <property type="match status" value="1"/>
</dbReference>
<dbReference type="PROSITE" id="PS51722">
    <property type="entry name" value="G_TR_2"/>
    <property type="match status" value="1"/>
</dbReference>
<accession>B0BB51</accession>
<evidence type="ECO:0000255" key="1">
    <source>
        <dbReference type="HAMAP-Rule" id="MF_00071"/>
    </source>
</evidence>
<proteinExistence type="inferred from homology"/>
<name>LEPA_CHLTB</name>
<feature type="chain" id="PRO_1000092386" description="Elongation factor 4">
    <location>
        <begin position="1"/>
        <end position="602"/>
    </location>
</feature>
<feature type="domain" description="tr-type G">
    <location>
        <begin position="7"/>
        <end position="188"/>
    </location>
</feature>
<feature type="binding site" evidence="1">
    <location>
        <begin position="19"/>
        <end position="24"/>
    </location>
    <ligand>
        <name>GTP</name>
        <dbReference type="ChEBI" id="CHEBI:37565"/>
    </ligand>
</feature>
<feature type="binding site" evidence="1">
    <location>
        <begin position="135"/>
        <end position="138"/>
    </location>
    <ligand>
        <name>GTP</name>
        <dbReference type="ChEBI" id="CHEBI:37565"/>
    </ligand>
</feature>
<gene>
    <name evidence="1" type="primary">lepA</name>
    <name type="ordered locus">CTLon_0315</name>
</gene>
<organism>
    <name type="scientific">Chlamydia trachomatis serovar L2b (strain UCH-1/proctitis)</name>
    <dbReference type="NCBI Taxonomy" id="471473"/>
    <lineage>
        <taxon>Bacteria</taxon>
        <taxon>Pseudomonadati</taxon>
        <taxon>Chlamydiota</taxon>
        <taxon>Chlamydiia</taxon>
        <taxon>Chlamydiales</taxon>
        <taxon>Chlamydiaceae</taxon>
        <taxon>Chlamydia/Chlamydophila group</taxon>
        <taxon>Chlamydia</taxon>
    </lineage>
</organism>
<comment type="function">
    <text evidence="1">Required for accurate and efficient protein synthesis under certain stress conditions. May act as a fidelity factor of the translation reaction, by catalyzing a one-codon backward translocation of tRNAs on improperly translocated ribosomes. Back-translocation proceeds from a post-translocation (POST) complex to a pre-translocation (PRE) complex, thus giving elongation factor G a second chance to translocate the tRNAs correctly. Binds to ribosomes in a GTP-dependent manner.</text>
</comment>
<comment type="catalytic activity">
    <reaction evidence="1">
        <text>GTP + H2O = GDP + phosphate + H(+)</text>
        <dbReference type="Rhea" id="RHEA:19669"/>
        <dbReference type="ChEBI" id="CHEBI:15377"/>
        <dbReference type="ChEBI" id="CHEBI:15378"/>
        <dbReference type="ChEBI" id="CHEBI:37565"/>
        <dbReference type="ChEBI" id="CHEBI:43474"/>
        <dbReference type="ChEBI" id="CHEBI:58189"/>
        <dbReference type="EC" id="3.6.5.n1"/>
    </reaction>
</comment>
<comment type="subcellular location">
    <subcellularLocation>
        <location evidence="1">Cell inner membrane</location>
        <topology evidence="1">Peripheral membrane protein</topology>
        <orientation evidence="1">Cytoplasmic side</orientation>
    </subcellularLocation>
</comment>
<comment type="similarity">
    <text evidence="1">Belongs to the TRAFAC class translation factor GTPase superfamily. Classic translation factor GTPase family. LepA subfamily.</text>
</comment>
<reference key="1">
    <citation type="journal article" date="2008" name="Genome Res.">
        <title>Chlamydia trachomatis: genome sequence analysis of lymphogranuloma venereum isolates.</title>
        <authorList>
            <person name="Thomson N.R."/>
            <person name="Holden M.T.G."/>
            <person name="Carder C."/>
            <person name="Lennard N."/>
            <person name="Lockey S.J."/>
            <person name="Marsh P."/>
            <person name="Skipp P."/>
            <person name="O'Connor C.D."/>
            <person name="Goodhead I."/>
            <person name="Norbertzcak H."/>
            <person name="Harris B."/>
            <person name="Ormond D."/>
            <person name="Rance R."/>
            <person name="Quail M.A."/>
            <person name="Parkhill J."/>
            <person name="Stephens R.S."/>
            <person name="Clarke I.N."/>
        </authorList>
    </citation>
    <scope>NUCLEOTIDE SEQUENCE [LARGE SCALE GENOMIC DNA]</scope>
    <source>
        <strain>UCH-1/proctitis</strain>
    </source>
</reference>